<evidence type="ECO:0000255" key="1">
    <source>
        <dbReference type="HAMAP-Rule" id="MF_01026"/>
    </source>
</evidence>
<evidence type="ECO:0000256" key="2">
    <source>
        <dbReference type="SAM" id="MobiDB-lite"/>
    </source>
</evidence>
<sequence>MSMSRGTLFDKVWEQHTVATLPSGQTQLFIGLHLIHEVTSPQAFAMLRERGLPVLYPQRTIATVDHIVPTDTLARPLQDALAEEMLQALEANCRAHNIPFFGIGSGRQGIVHVIAPEQGLTQPGMTIACGDSHTSTHGAFGAIAFGIGTSQVRDVLATQTLALNKLKVRKVEVNGSLAAGVYAKDVILHVIRHLGVKGGVGYAYEFAGTTFGQLSMEERMTVCNMAIEGGARCGYVNPDETTFAYLKGRPFAPQGKAWDEAVAWWRSLASDADAEYDDVVTFAAADIAPTVTWGITPGQSVAVDETLPTLESLPVAERAIAAEAYAYMDLQPGQPIQGTKIDVCFIGSCTNGRISDLRQAAKVVEGRKVKPGVKAFVVPGSERVKAQAEAEGLDVVFKAAGFEWRNPGCSMCLAMNPDKLQGRQISASSSNRNFKGRQGSPSGRTLLMSPAMVAAAAIAGEVTDVRAFL</sequence>
<organism>
    <name type="scientific">Thermosynechococcus vestitus (strain NIES-2133 / IAM M-273 / BP-1)</name>
    <dbReference type="NCBI Taxonomy" id="197221"/>
    <lineage>
        <taxon>Bacteria</taxon>
        <taxon>Bacillati</taxon>
        <taxon>Cyanobacteriota</taxon>
        <taxon>Cyanophyceae</taxon>
        <taxon>Acaryochloridales</taxon>
        <taxon>Thermosynechococcaceae</taxon>
        <taxon>Thermosynechococcus</taxon>
    </lineage>
</organism>
<dbReference type="EC" id="4.2.1.33" evidence="1"/>
<dbReference type="EMBL" id="BA000039">
    <property type="protein sequence ID" value="BAC08461.1"/>
    <property type="molecule type" value="Genomic_DNA"/>
</dbReference>
<dbReference type="RefSeq" id="NP_681699.1">
    <property type="nucleotide sequence ID" value="NC_004113.1"/>
</dbReference>
<dbReference type="SMR" id="Q8DKF0"/>
<dbReference type="STRING" id="197221.gene:10747501"/>
<dbReference type="EnsemblBacteria" id="BAC08461">
    <property type="protein sequence ID" value="BAC08461"/>
    <property type="gene ID" value="BAC08461"/>
</dbReference>
<dbReference type="KEGG" id="tel:tlr0909"/>
<dbReference type="PATRIC" id="fig|197221.4.peg.955"/>
<dbReference type="eggNOG" id="COG0065">
    <property type="taxonomic scope" value="Bacteria"/>
</dbReference>
<dbReference type="UniPathway" id="UPA00048">
    <property type="reaction ID" value="UER00071"/>
</dbReference>
<dbReference type="Proteomes" id="UP000000440">
    <property type="component" value="Chromosome"/>
</dbReference>
<dbReference type="GO" id="GO:0003861">
    <property type="term" value="F:3-isopropylmalate dehydratase activity"/>
    <property type="evidence" value="ECO:0007669"/>
    <property type="project" value="UniProtKB-UniRule"/>
</dbReference>
<dbReference type="GO" id="GO:0051539">
    <property type="term" value="F:4 iron, 4 sulfur cluster binding"/>
    <property type="evidence" value="ECO:0007669"/>
    <property type="project" value="UniProtKB-KW"/>
</dbReference>
<dbReference type="GO" id="GO:0046872">
    <property type="term" value="F:metal ion binding"/>
    <property type="evidence" value="ECO:0007669"/>
    <property type="project" value="UniProtKB-KW"/>
</dbReference>
<dbReference type="GO" id="GO:0009098">
    <property type="term" value="P:L-leucine biosynthetic process"/>
    <property type="evidence" value="ECO:0007669"/>
    <property type="project" value="UniProtKB-UniRule"/>
</dbReference>
<dbReference type="CDD" id="cd01583">
    <property type="entry name" value="IPMI"/>
    <property type="match status" value="1"/>
</dbReference>
<dbReference type="Gene3D" id="3.30.499.10">
    <property type="entry name" value="Aconitase, domain 3"/>
    <property type="match status" value="2"/>
</dbReference>
<dbReference type="HAMAP" id="MF_01026">
    <property type="entry name" value="LeuC_type1"/>
    <property type="match status" value="1"/>
</dbReference>
<dbReference type="InterPro" id="IPR004430">
    <property type="entry name" value="3-IsopropMal_deHydase_lsu"/>
</dbReference>
<dbReference type="InterPro" id="IPR015931">
    <property type="entry name" value="Acnase/IPM_dHydase_lsu_aba_1/3"/>
</dbReference>
<dbReference type="InterPro" id="IPR001030">
    <property type="entry name" value="Acoase/IPM_deHydtase_lsu_aba"/>
</dbReference>
<dbReference type="InterPro" id="IPR018136">
    <property type="entry name" value="Aconitase_4Fe-4S_BS"/>
</dbReference>
<dbReference type="InterPro" id="IPR036008">
    <property type="entry name" value="Aconitase_4Fe-4S_dom"/>
</dbReference>
<dbReference type="InterPro" id="IPR050067">
    <property type="entry name" value="IPM_dehydratase_rel_enz"/>
</dbReference>
<dbReference type="InterPro" id="IPR033941">
    <property type="entry name" value="IPMI_cat"/>
</dbReference>
<dbReference type="NCBIfam" id="TIGR00170">
    <property type="entry name" value="leuC"/>
    <property type="match status" value="1"/>
</dbReference>
<dbReference type="NCBIfam" id="NF004016">
    <property type="entry name" value="PRK05478.1"/>
    <property type="match status" value="1"/>
</dbReference>
<dbReference type="NCBIfam" id="NF009116">
    <property type="entry name" value="PRK12466.1"/>
    <property type="match status" value="1"/>
</dbReference>
<dbReference type="PANTHER" id="PTHR43822:SF9">
    <property type="entry name" value="3-ISOPROPYLMALATE DEHYDRATASE"/>
    <property type="match status" value="1"/>
</dbReference>
<dbReference type="PANTHER" id="PTHR43822">
    <property type="entry name" value="HOMOACONITASE, MITOCHONDRIAL-RELATED"/>
    <property type="match status" value="1"/>
</dbReference>
<dbReference type="Pfam" id="PF00330">
    <property type="entry name" value="Aconitase"/>
    <property type="match status" value="1"/>
</dbReference>
<dbReference type="PRINTS" id="PR00415">
    <property type="entry name" value="ACONITASE"/>
</dbReference>
<dbReference type="SUPFAM" id="SSF53732">
    <property type="entry name" value="Aconitase iron-sulfur domain"/>
    <property type="match status" value="1"/>
</dbReference>
<dbReference type="PROSITE" id="PS00450">
    <property type="entry name" value="ACONITASE_1"/>
    <property type="match status" value="1"/>
</dbReference>
<dbReference type="PROSITE" id="PS01244">
    <property type="entry name" value="ACONITASE_2"/>
    <property type="match status" value="1"/>
</dbReference>
<protein>
    <recommendedName>
        <fullName evidence="1">3-isopropylmalate dehydratase large subunit</fullName>
        <ecNumber evidence="1">4.2.1.33</ecNumber>
    </recommendedName>
    <alternativeName>
        <fullName evidence="1">Alpha-IPM isomerase</fullName>
        <shortName evidence="1">IPMI</shortName>
    </alternativeName>
    <alternativeName>
        <fullName evidence="1">Isopropylmalate isomerase</fullName>
    </alternativeName>
</protein>
<reference key="1">
    <citation type="journal article" date="2002" name="DNA Res.">
        <title>Complete genome structure of the thermophilic cyanobacterium Thermosynechococcus elongatus BP-1.</title>
        <authorList>
            <person name="Nakamura Y."/>
            <person name="Kaneko T."/>
            <person name="Sato S."/>
            <person name="Ikeuchi M."/>
            <person name="Katoh H."/>
            <person name="Sasamoto S."/>
            <person name="Watanabe A."/>
            <person name="Iriguchi M."/>
            <person name="Kawashima K."/>
            <person name="Kimura T."/>
            <person name="Kishida Y."/>
            <person name="Kiyokawa C."/>
            <person name="Kohara M."/>
            <person name="Matsumoto M."/>
            <person name="Matsuno A."/>
            <person name="Nakazaki N."/>
            <person name="Shimpo S."/>
            <person name="Sugimoto M."/>
            <person name="Takeuchi C."/>
            <person name="Yamada M."/>
            <person name="Tabata S."/>
        </authorList>
    </citation>
    <scope>NUCLEOTIDE SEQUENCE [LARGE SCALE GENOMIC DNA]</scope>
    <source>
        <strain>NIES-2133 / IAM M-273 / BP-1</strain>
    </source>
</reference>
<gene>
    <name evidence="1" type="primary">leuC</name>
    <name type="ordered locus">tlr0909</name>
</gene>
<keyword id="KW-0004">4Fe-4S</keyword>
<keyword id="KW-0028">Amino-acid biosynthesis</keyword>
<keyword id="KW-0100">Branched-chain amino acid biosynthesis</keyword>
<keyword id="KW-0408">Iron</keyword>
<keyword id="KW-0411">Iron-sulfur</keyword>
<keyword id="KW-0432">Leucine biosynthesis</keyword>
<keyword id="KW-0456">Lyase</keyword>
<keyword id="KW-0479">Metal-binding</keyword>
<keyword id="KW-1185">Reference proteome</keyword>
<name>LEUC_THEVB</name>
<proteinExistence type="inferred from homology"/>
<comment type="function">
    <text evidence="1">Catalyzes the isomerization between 2-isopropylmalate and 3-isopropylmalate, via the formation of 2-isopropylmaleate.</text>
</comment>
<comment type="catalytic activity">
    <reaction evidence="1">
        <text>(2R,3S)-3-isopropylmalate = (2S)-2-isopropylmalate</text>
        <dbReference type="Rhea" id="RHEA:32287"/>
        <dbReference type="ChEBI" id="CHEBI:1178"/>
        <dbReference type="ChEBI" id="CHEBI:35121"/>
        <dbReference type="EC" id="4.2.1.33"/>
    </reaction>
</comment>
<comment type="cofactor">
    <cofactor evidence="1">
        <name>[4Fe-4S] cluster</name>
        <dbReference type="ChEBI" id="CHEBI:49883"/>
    </cofactor>
    <text evidence="1">Binds 1 [4Fe-4S] cluster per subunit.</text>
</comment>
<comment type="pathway">
    <text evidence="1">Amino-acid biosynthesis; L-leucine biosynthesis; L-leucine from 3-methyl-2-oxobutanoate: step 2/4.</text>
</comment>
<comment type="subunit">
    <text evidence="1">Heterodimer of LeuC and LeuD.</text>
</comment>
<comment type="similarity">
    <text evidence="1">Belongs to the aconitase/IPM isomerase family. LeuC type 1 subfamily.</text>
</comment>
<accession>Q8DKF0</accession>
<feature type="chain" id="PRO_0000076828" description="3-isopropylmalate dehydratase large subunit">
    <location>
        <begin position="1"/>
        <end position="469"/>
    </location>
</feature>
<feature type="region of interest" description="Disordered" evidence="2">
    <location>
        <begin position="424"/>
        <end position="443"/>
    </location>
</feature>
<feature type="binding site" evidence="1">
    <location>
        <position position="349"/>
    </location>
    <ligand>
        <name>[4Fe-4S] cluster</name>
        <dbReference type="ChEBI" id="CHEBI:49883"/>
    </ligand>
</feature>
<feature type="binding site" evidence="1">
    <location>
        <position position="409"/>
    </location>
    <ligand>
        <name>[4Fe-4S] cluster</name>
        <dbReference type="ChEBI" id="CHEBI:49883"/>
    </ligand>
</feature>
<feature type="binding site" evidence="1">
    <location>
        <position position="412"/>
    </location>
    <ligand>
        <name>[4Fe-4S] cluster</name>
        <dbReference type="ChEBI" id="CHEBI:49883"/>
    </ligand>
</feature>